<organism>
    <name type="scientific">Heliobacterium modesticaldum (strain ATCC 51547 / Ice1)</name>
    <dbReference type="NCBI Taxonomy" id="498761"/>
    <lineage>
        <taxon>Bacteria</taxon>
        <taxon>Bacillati</taxon>
        <taxon>Bacillota</taxon>
        <taxon>Clostridia</taxon>
        <taxon>Eubacteriales</taxon>
        <taxon>Heliobacteriaceae</taxon>
        <taxon>Heliomicrobium</taxon>
    </lineage>
</organism>
<comment type="function">
    <text evidence="1">DNA-dependent RNA polymerase catalyzes the transcription of DNA into RNA using the four ribonucleoside triphosphates as substrates.</text>
</comment>
<comment type="catalytic activity">
    <reaction evidence="1">
        <text>RNA(n) + a ribonucleoside 5'-triphosphate = RNA(n+1) + diphosphate</text>
        <dbReference type="Rhea" id="RHEA:21248"/>
        <dbReference type="Rhea" id="RHEA-COMP:14527"/>
        <dbReference type="Rhea" id="RHEA-COMP:17342"/>
        <dbReference type="ChEBI" id="CHEBI:33019"/>
        <dbReference type="ChEBI" id="CHEBI:61557"/>
        <dbReference type="ChEBI" id="CHEBI:140395"/>
        <dbReference type="EC" id="2.7.7.6"/>
    </reaction>
</comment>
<comment type="cofactor">
    <cofactor evidence="1">
        <name>Mg(2+)</name>
        <dbReference type="ChEBI" id="CHEBI:18420"/>
    </cofactor>
    <text evidence="1">Binds 1 Mg(2+) ion per subunit.</text>
</comment>
<comment type="cofactor">
    <cofactor evidence="1">
        <name>Zn(2+)</name>
        <dbReference type="ChEBI" id="CHEBI:29105"/>
    </cofactor>
    <text evidence="1">Binds 2 Zn(2+) ions per subunit.</text>
</comment>
<comment type="subunit">
    <text evidence="1">The RNAP catalytic core consists of 2 alpha, 1 beta, 1 beta' and 1 omega subunit. When a sigma factor is associated with the core the holoenzyme is formed, which can initiate transcription.</text>
</comment>
<comment type="similarity">
    <text evidence="1">Belongs to the RNA polymerase beta' chain family.</text>
</comment>
<accession>B0TC49</accession>
<gene>
    <name evidence="1" type="primary">rpoC</name>
    <name type="ordered locus">Helmi_13230</name>
    <name type="ORF">HM1_1371</name>
</gene>
<name>RPOC_HELMI</name>
<keyword id="KW-0240">DNA-directed RNA polymerase</keyword>
<keyword id="KW-0460">Magnesium</keyword>
<keyword id="KW-0479">Metal-binding</keyword>
<keyword id="KW-0548">Nucleotidyltransferase</keyword>
<keyword id="KW-1185">Reference proteome</keyword>
<keyword id="KW-0804">Transcription</keyword>
<keyword id="KW-0808">Transferase</keyword>
<keyword id="KW-0862">Zinc</keyword>
<protein>
    <recommendedName>
        <fullName evidence="1">DNA-directed RNA polymerase subunit beta'</fullName>
        <shortName evidence="1">RNAP subunit beta'</shortName>
        <ecNumber evidence="1">2.7.7.6</ecNumber>
    </recommendedName>
    <alternativeName>
        <fullName evidence="1">RNA polymerase subunit beta'</fullName>
    </alternativeName>
    <alternativeName>
        <fullName evidence="1">Transcriptase subunit beta'</fullName>
    </alternativeName>
</protein>
<sequence length="1180" mass="132243">MLDVNNFDRMRIGLASPDLIRQWSSGEVKKPETINYRTLKPERDGLFCERIFGPTRDWECHCGKYKRVRYKGIVCDRCGVEVTRSKVRRERLGHIELAAPVSHIWYFKGIPSRMGLLLDMSPRSLEKVLYFVAYIVIEQGDTPLMKKQLLTETEYREHREKYGNRFRAGMGAEAIKELLVEMDLEQLCRELRQELKEVTGQRKVRAIRRLEVVEAFKNSGNRPEWMIMDVIPVIPPELRPMVQLDGGRFATSDLNDLYRRVINRNNRLKRLLDLGAPDIIVRNEKRMLQEAVDALIDNGRRGRPVTGPGNRPLKSLSDMLKGKQGRFRQNLLGKRVDYSGRSVIVVGPELKLHQCGLPKEMALELFKPFVMKKLVEDGHAHNIKSAKRMVERVKNEVWDVLEDVIAEHPVLLNRAPTLHRLGIQAFEPVLVEGRALQIHPLVCTAYNADFDGDQMAVHVPLSAEAQAEARNLMLSAHNILNPKDGRPVATPTQDMVIGSYYLTIEREGAKGENMIFASPDEAIAAYDAKSVHLQARIRVRPTARLQEALEFAKSEARSFDEQGRLMTTVGRLIFNSVIPPKVGYVNEVVGKKQLGNIVARCYDKLGISETAAMLDGIKKLGYTFSTRAGITVGITDVEVPEEKRRLIAEADSFVEKVEQQYRRGLITEEERYQKVIDIWNKTTDGVTQALMRTLDKFNPVYMMANSGARGNIQQIRQLAGMRGLMADPSGRIIDLPIKANFREGLTVLEYFISTHGARKGLADTALRTADSGYLTRRLVDVSQDVIVREIDCGTHEGIPVEAIVDGKQVIEKLSDRLTGRYALEEIVDPETGEKLAAYNEEIQADAAERIDQLIKQGKLAHNAVYIRSVLTCRTRYGVCRRCYGRNLATGRSVEIGEAVGIIAAQSIGEPGTQLTMRTFHTGGVAGDDITQGLPRVEELFEARKPKGLAIIAEQDGIVRIVDNKGRKDIEIVTDDGESHHYAIPYNSRLKVEDGQRVQAGTELTEGSVNPHDMLRVKGIQGVQTYLLREVQRVYRLQGVDINDKHIEVMVRQMMRKVKVEEPGDTDLLPGGLIDIADFEAENLKAIEAGLEPATARPILLGITKASLATDSFLSAASFQETTRVLTEAAIKGKVDPLLGLKENVIIGKLIPAGTGMSRYRNIQVLVGDEIDEARLEDGMA</sequence>
<dbReference type="EC" id="2.7.7.6" evidence="1"/>
<dbReference type="EMBL" id="CP000930">
    <property type="protein sequence ID" value="ABZ83948.1"/>
    <property type="molecule type" value="Genomic_DNA"/>
</dbReference>
<dbReference type="RefSeq" id="WP_012282464.1">
    <property type="nucleotide sequence ID" value="NC_010337.2"/>
</dbReference>
<dbReference type="SMR" id="B0TC49"/>
<dbReference type="STRING" id="498761.HM1_1371"/>
<dbReference type="KEGG" id="hmo:HM1_1371"/>
<dbReference type="eggNOG" id="COG0086">
    <property type="taxonomic scope" value="Bacteria"/>
</dbReference>
<dbReference type="HOGENOM" id="CLU_000524_3_1_9"/>
<dbReference type="OrthoDB" id="9815296at2"/>
<dbReference type="Proteomes" id="UP000008550">
    <property type="component" value="Chromosome"/>
</dbReference>
<dbReference type="GO" id="GO:0000428">
    <property type="term" value="C:DNA-directed RNA polymerase complex"/>
    <property type="evidence" value="ECO:0007669"/>
    <property type="project" value="UniProtKB-KW"/>
</dbReference>
<dbReference type="GO" id="GO:0003677">
    <property type="term" value="F:DNA binding"/>
    <property type="evidence" value="ECO:0007669"/>
    <property type="project" value="UniProtKB-UniRule"/>
</dbReference>
<dbReference type="GO" id="GO:0003899">
    <property type="term" value="F:DNA-directed RNA polymerase activity"/>
    <property type="evidence" value="ECO:0007669"/>
    <property type="project" value="UniProtKB-UniRule"/>
</dbReference>
<dbReference type="GO" id="GO:0000287">
    <property type="term" value="F:magnesium ion binding"/>
    <property type="evidence" value="ECO:0007669"/>
    <property type="project" value="UniProtKB-UniRule"/>
</dbReference>
<dbReference type="GO" id="GO:0008270">
    <property type="term" value="F:zinc ion binding"/>
    <property type="evidence" value="ECO:0007669"/>
    <property type="project" value="UniProtKB-UniRule"/>
</dbReference>
<dbReference type="GO" id="GO:0006351">
    <property type="term" value="P:DNA-templated transcription"/>
    <property type="evidence" value="ECO:0007669"/>
    <property type="project" value="UniProtKB-UniRule"/>
</dbReference>
<dbReference type="CDD" id="cd02655">
    <property type="entry name" value="RNAP_beta'_C"/>
    <property type="match status" value="1"/>
</dbReference>
<dbReference type="CDD" id="cd01609">
    <property type="entry name" value="RNAP_beta'_N"/>
    <property type="match status" value="1"/>
</dbReference>
<dbReference type="FunFam" id="1.10.132.30:FF:000003">
    <property type="entry name" value="DNA-directed RNA polymerase subunit beta"/>
    <property type="match status" value="1"/>
</dbReference>
<dbReference type="FunFam" id="1.10.150.390:FF:000002">
    <property type="entry name" value="DNA-directed RNA polymerase subunit beta"/>
    <property type="match status" value="1"/>
</dbReference>
<dbReference type="FunFam" id="1.10.40.90:FF:000001">
    <property type="entry name" value="DNA-directed RNA polymerase subunit beta"/>
    <property type="match status" value="1"/>
</dbReference>
<dbReference type="FunFam" id="4.10.860.120:FF:000001">
    <property type="entry name" value="DNA-directed RNA polymerase subunit beta"/>
    <property type="match status" value="1"/>
</dbReference>
<dbReference type="Gene3D" id="1.10.132.30">
    <property type="match status" value="1"/>
</dbReference>
<dbReference type="Gene3D" id="1.10.150.390">
    <property type="match status" value="1"/>
</dbReference>
<dbReference type="Gene3D" id="1.10.1790.20">
    <property type="match status" value="1"/>
</dbReference>
<dbReference type="Gene3D" id="1.10.40.90">
    <property type="match status" value="1"/>
</dbReference>
<dbReference type="Gene3D" id="2.40.40.20">
    <property type="match status" value="1"/>
</dbReference>
<dbReference type="Gene3D" id="2.40.50.100">
    <property type="match status" value="1"/>
</dbReference>
<dbReference type="Gene3D" id="4.10.860.120">
    <property type="entry name" value="RNA polymerase II, clamp domain"/>
    <property type="match status" value="1"/>
</dbReference>
<dbReference type="Gene3D" id="1.10.274.100">
    <property type="entry name" value="RNA polymerase Rpb1, domain 3"/>
    <property type="match status" value="1"/>
</dbReference>
<dbReference type="HAMAP" id="MF_01322">
    <property type="entry name" value="RNApol_bact_RpoC"/>
    <property type="match status" value="1"/>
</dbReference>
<dbReference type="InterPro" id="IPR045867">
    <property type="entry name" value="DNA-dir_RpoC_beta_prime"/>
</dbReference>
<dbReference type="InterPro" id="IPR012754">
    <property type="entry name" value="DNA-dir_RpoC_beta_prime_bact"/>
</dbReference>
<dbReference type="InterPro" id="IPR000722">
    <property type="entry name" value="RNA_pol_asu"/>
</dbReference>
<dbReference type="InterPro" id="IPR006592">
    <property type="entry name" value="RNA_pol_N"/>
</dbReference>
<dbReference type="InterPro" id="IPR007080">
    <property type="entry name" value="RNA_pol_Rpb1_1"/>
</dbReference>
<dbReference type="InterPro" id="IPR007066">
    <property type="entry name" value="RNA_pol_Rpb1_3"/>
</dbReference>
<dbReference type="InterPro" id="IPR042102">
    <property type="entry name" value="RNA_pol_Rpb1_3_sf"/>
</dbReference>
<dbReference type="InterPro" id="IPR007083">
    <property type="entry name" value="RNA_pol_Rpb1_4"/>
</dbReference>
<dbReference type="InterPro" id="IPR007081">
    <property type="entry name" value="RNA_pol_Rpb1_5"/>
</dbReference>
<dbReference type="InterPro" id="IPR044893">
    <property type="entry name" value="RNA_pol_Rpb1_clamp_domain"/>
</dbReference>
<dbReference type="InterPro" id="IPR038120">
    <property type="entry name" value="Rpb1_funnel_sf"/>
</dbReference>
<dbReference type="NCBIfam" id="NF011498">
    <property type="entry name" value="PRK14906.1"/>
    <property type="match status" value="1"/>
</dbReference>
<dbReference type="NCBIfam" id="TIGR02386">
    <property type="entry name" value="rpoC_TIGR"/>
    <property type="match status" value="1"/>
</dbReference>
<dbReference type="PANTHER" id="PTHR19376">
    <property type="entry name" value="DNA-DIRECTED RNA POLYMERASE"/>
    <property type="match status" value="1"/>
</dbReference>
<dbReference type="PANTHER" id="PTHR19376:SF54">
    <property type="entry name" value="DNA-DIRECTED RNA POLYMERASE SUBUNIT BETA"/>
    <property type="match status" value="1"/>
</dbReference>
<dbReference type="Pfam" id="PF04997">
    <property type="entry name" value="RNA_pol_Rpb1_1"/>
    <property type="match status" value="1"/>
</dbReference>
<dbReference type="Pfam" id="PF00623">
    <property type="entry name" value="RNA_pol_Rpb1_2"/>
    <property type="match status" value="1"/>
</dbReference>
<dbReference type="Pfam" id="PF04983">
    <property type="entry name" value="RNA_pol_Rpb1_3"/>
    <property type="match status" value="1"/>
</dbReference>
<dbReference type="Pfam" id="PF05000">
    <property type="entry name" value="RNA_pol_Rpb1_4"/>
    <property type="match status" value="1"/>
</dbReference>
<dbReference type="Pfam" id="PF04998">
    <property type="entry name" value="RNA_pol_Rpb1_5"/>
    <property type="match status" value="2"/>
</dbReference>
<dbReference type="SMART" id="SM00663">
    <property type="entry name" value="RPOLA_N"/>
    <property type="match status" value="1"/>
</dbReference>
<dbReference type="SUPFAM" id="SSF64484">
    <property type="entry name" value="beta and beta-prime subunits of DNA dependent RNA-polymerase"/>
    <property type="match status" value="1"/>
</dbReference>
<feature type="chain" id="PRO_0000353381" description="DNA-directed RNA polymerase subunit beta'">
    <location>
        <begin position="1"/>
        <end position="1180"/>
    </location>
</feature>
<feature type="binding site" evidence="1">
    <location>
        <position position="60"/>
    </location>
    <ligand>
        <name>Zn(2+)</name>
        <dbReference type="ChEBI" id="CHEBI:29105"/>
        <label>1</label>
    </ligand>
</feature>
<feature type="binding site" evidence="1">
    <location>
        <position position="62"/>
    </location>
    <ligand>
        <name>Zn(2+)</name>
        <dbReference type="ChEBI" id="CHEBI:29105"/>
        <label>1</label>
    </ligand>
</feature>
<feature type="binding site" evidence="1">
    <location>
        <position position="75"/>
    </location>
    <ligand>
        <name>Zn(2+)</name>
        <dbReference type="ChEBI" id="CHEBI:29105"/>
        <label>1</label>
    </ligand>
</feature>
<feature type="binding site" evidence="1">
    <location>
        <position position="78"/>
    </location>
    <ligand>
        <name>Zn(2+)</name>
        <dbReference type="ChEBI" id="CHEBI:29105"/>
        <label>1</label>
    </ligand>
</feature>
<feature type="binding site" evidence="1">
    <location>
        <position position="449"/>
    </location>
    <ligand>
        <name>Mg(2+)</name>
        <dbReference type="ChEBI" id="CHEBI:18420"/>
    </ligand>
</feature>
<feature type="binding site" evidence="1">
    <location>
        <position position="451"/>
    </location>
    <ligand>
        <name>Mg(2+)</name>
        <dbReference type="ChEBI" id="CHEBI:18420"/>
    </ligand>
</feature>
<feature type="binding site" evidence="1">
    <location>
        <position position="453"/>
    </location>
    <ligand>
        <name>Mg(2+)</name>
        <dbReference type="ChEBI" id="CHEBI:18420"/>
    </ligand>
</feature>
<feature type="binding site" evidence="1">
    <location>
        <position position="792"/>
    </location>
    <ligand>
        <name>Zn(2+)</name>
        <dbReference type="ChEBI" id="CHEBI:29105"/>
        <label>2</label>
    </ligand>
</feature>
<feature type="binding site" evidence="1">
    <location>
        <position position="872"/>
    </location>
    <ligand>
        <name>Zn(2+)</name>
        <dbReference type="ChEBI" id="CHEBI:29105"/>
        <label>2</label>
    </ligand>
</feature>
<feature type="binding site" evidence="1">
    <location>
        <position position="879"/>
    </location>
    <ligand>
        <name>Zn(2+)</name>
        <dbReference type="ChEBI" id="CHEBI:29105"/>
        <label>2</label>
    </ligand>
</feature>
<feature type="binding site" evidence="1">
    <location>
        <position position="882"/>
    </location>
    <ligand>
        <name>Zn(2+)</name>
        <dbReference type="ChEBI" id="CHEBI:29105"/>
        <label>2</label>
    </ligand>
</feature>
<reference key="1">
    <citation type="journal article" date="2008" name="J. Bacteriol.">
        <title>The genome of Heliobacterium modesticaldum, a phototrophic representative of the Firmicutes containing the simplest photosynthetic apparatus.</title>
        <authorList>
            <person name="Sattley W.M."/>
            <person name="Madigan M.T."/>
            <person name="Swingley W.D."/>
            <person name="Cheung P.C."/>
            <person name="Clocksin K.M."/>
            <person name="Conrad A.L."/>
            <person name="Dejesa L.C."/>
            <person name="Honchak B.M."/>
            <person name="Jung D.O."/>
            <person name="Karbach L.E."/>
            <person name="Kurdoglu A."/>
            <person name="Lahiri S."/>
            <person name="Mastrian S.D."/>
            <person name="Page L.E."/>
            <person name="Taylor H.L."/>
            <person name="Wang Z.T."/>
            <person name="Raymond J."/>
            <person name="Chen M."/>
            <person name="Blankenship R.E."/>
            <person name="Touchman J.W."/>
        </authorList>
    </citation>
    <scope>NUCLEOTIDE SEQUENCE [LARGE SCALE GENOMIC DNA]</scope>
    <source>
        <strain>ATCC 51547 / Ice1</strain>
    </source>
</reference>
<evidence type="ECO:0000255" key="1">
    <source>
        <dbReference type="HAMAP-Rule" id="MF_01322"/>
    </source>
</evidence>
<proteinExistence type="inferred from homology"/>